<feature type="chain" id="PRO_0000414252" description="U1 small nuclear ribonucleoprotein C">
    <location>
        <begin position="1"/>
        <end position="159"/>
    </location>
</feature>
<feature type="zinc finger region" description="Matrin-type" evidence="2">
    <location>
        <begin position="4"/>
        <end position="36"/>
    </location>
</feature>
<feature type="region of interest" description="Disordered" evidence="3">
    <location>
        <begin position="62"/>
        <end position="96"/>
    </location>
</feature>
<feature type="compositionally biased region" description="Pro residues" evidence="3">
    <location>
        <begin position="63"/>
        <end position="92"/>
    </location>
</feature>
<feature type="modified residue" description="Phosphotyrosine" evidence="1">
    <location>
        <position position="8"/>
    </location>
</feature>
<feature type="modified residue" description="Phosphoserine" evidence="1">
    <location>
        <position position="17"/>
    </location>
</feature>
<feature type="modified residue" description="N6-acetyllysine" evidence="1">
    <location>
        <position position="52"/>
    </location>
</feature>
<reference key="1">
    <citation type="journal article" date="2004" name="Nature">
        <title>Genome sequence of the Brown Norway rat yields insights into mammalian evolution.</title>
        <authorList>
            <person name="Gibbs R.A."/>
            <person name="Weinstock G.M."/>
            <person name="Metzker M.L."/>
            <person name="Muzny D.M."/>
            <person name="Sodergren E.J."/>
            <person name="Scherer S."/>
            <person name="Scott G."/>
            <person name="Steffen D."/>
            <person name="Worley K.C."/>
            <person name="Burch P.E."/>
            <person name="Okwuonu G."/>
            <person name="Hines S."/>
            <person name="Lewis L."/>
            <person name="Deramo C."/>
            <person name="Delgado O."/>
            <person name="Dugan-Rocha S."/>
            <person name="Miner G."/>
            <person name="Morgan M."/>
            <person name="Hawes A."/>
            <person name="Gill R."/>
            <person name="Holt R.A."/>
            <person name="Adams M.D."/>
            <person name="Amanatides P.G."/>
            <person name="Baden-Tillson H."/>
            <person name="Barnstead M."/>
            <person name="Chin S."/>
            <person name="Evans C.A."/>
            <person name="Ferriera S."/>
            <person name="Fosler C."/>
            <person name="Glodek A."/>
            <person name="Gu Z."/>
            <person name="Jennings D."/>
            <person name="Kraft C.L."/>
            <person name="Nguyen T."/>
            <person name="Pfannkoch C.M."/>
            <person name="Sitter C."/>
            <person name="Sutton G.G."/>
            <person name="Venter J.C."/>
            <person name="Woodage T."/>
            <person name="Smith D."/>
            <person name="Lee H.-M."/>
            <person name="Gustafson E."/>
            <person name="Cahill P."/>
            <person name="Kana A."/>
            <person name="Doucette-Stamm L."/>
            <person name="Weinstock K."/>
            <person name="Fechtel K."/>
            <person name="Weiss R.B."/>
            <person name="Dunn D.M."/>
            <person name="Green E.D."/>
            <person name="Blakesley R.W."/>
            <person name="Bouffard G.G."/>
            <person name="De Jong P.J."/>
            <person name="Osoegawa K."/>
            <person name="Zhu B."/>
            <person name="Marra M."/>
            <person name="Schein J."/>
            <person name="Bosdet I."/>
            <person name="Fjell C."/>
            <person name="Jones S."/>
            <person name="Krzywinski M."/>
            <person name="Mathewson C."/>
            <person name="Siddiqui A."/>
            <person name="Wye N."/>
            <person name="McPherson J."/>
            <person name="Zhao S."/>
            <person name="Fraser C.M."/>
            <person name="Shetty J."/>
            <person name="Shatsman S."/>
            <person name="Geer K."/>
            <person name="Chen Y."/>
            <person name="Abramzon S."/>
            <person name="Nierman W.C."/>
            <person name="Havlak P.H."/>
            <person name="Chen R."/>
            <person name="Durbin K.J."/>
            <person name="Egan A."/>
            <person name="Ren Y."/>
            <person name="Song X.-Z."/>
            <person name="Li B."/>
            <person name="Liu Y."/>
            <person name="Qin X."/>
            <person name="Cawley S."/>
            <person name="Cooney A.J."/>
            <person name="D'Souza L.M."/>
            <person name="Martin K."/>
            <person name="Wu J.Q."/>
            <person name="Gonzalez-Garay M.L."/>
            <person name="Jackson A.R."/>
            <person name="Kalafus K.J."/>
            <person name="McLeod M.P."/>
            <person name="Milosavljevic A."/>
            <person name="Virk D."/>
            <person name="Volkov A."/>
            <person name="Wheeler D.A."/>
            <person name="Zhang Z."/>
            <person name="Bailey J.A."/>
            <person name="Eichler E.E."/>
            <person name="Tuzun E."/>
            <person name="Birney E."/>
            <person name="Mongin E."/>
            <person name="Ureta-Vidal A."/>
            <person name="Woodwark C."/>
            <person name="Zdobnov E."/>
            <person name="Bork P."/>
            <person name="Suyama M."/>
            <person name="Torrents D."/>
            <person name="Alexandersson M."/>
            <person name="Trask B.J."/>
            <person name="Young J.M."/>
            <person name="Huang H."/>
            <person name="Wang H."/>
            <person name="Xing H."/>
            <person name="Daniels S."/>
            <person name="Gietzen D."/>
            <person name="Schmidt J."/>
            <person name="Stevens K."/>
            <person name="Vitt U."/>
            <person name="Wingrove J."/>
            <person name="Camara F."/>
            <person name="Mar Alba M."/>
            <person name="Abril J.F."/>
            <person name="Guigo R."/>
            <person name="Smit A."/>
            <person name="Dubchak I."/>
            <person name="Rubin E.M."/>
            <person name="Couronne O."/>
            <person name="Poliakov A."/>
            <person name="Huebner N."/>
            <person name="Ganten D."/>
            <person name="Goesele C."/>
            <person name="Hummel O."/>
            <person name="Kreitler T."/>
            <person name="Lee Y.-A."/>
            <person name="Monti J."/>
            <person name="Schulz H."/>
            <person name="Zimdahl H."/>
            <person name="Himmelbauer H."/>
            <person name="Lehrach H."/>
            <person name="Jacob H.J."/>
            <person name="Bromberg S."/>
            <person name="Gullings-Handley J."/>
            <person name="Jensen-Seaman M.I."/>
            <person name="Kwitek A.E."/>
            <person name="Lazar J."/>
            <person name="Pasko D."/>
            <person name="Tonellato P.J."/>
            <person name="Twigger S."/>
            <person name="Ponting C.P."/>
            <person name="Duarte J.M."/>
            <person name="Rice S."/>
            <person name="Goodstadt L."/>
            <person name="Beatson S.A."/>
            <person name="Emes R.D."/>
            <person name="Winter E.E."/>
            <person name="Webber C."/>
            <person name="Brandt P."/>
            <person name="Nyakatura G."/>
            <person name="Adetobi M."/>
            <person name="Chiaromonte F."/>
            <person name="Elnitski L."/>
            <person name="Eswara P."/>
            <person name="Hardison R.C."/>
            <person name="Hou M."/>
            <person name="Kolbe D."/>
            <person name="Makova K."/>
            <person name="Miller W."/>
            <person name="Nekrutenko A."/>
            <person name="Riemer C."/>
            <person name="Schwartz S."/>
            <person name="Taylor J."/>
            <person name="Yang S."/>
            <person name="Zhang Y."/>
            <person name="Lindpaintner K."/>
            <person name="Andrews T.D."/>
            <person name="Caccamo M."/>
            <person name="Clamp M."/>
            <person name="Clarke L."/>
            <person name="Curwen V."/>
            <person name="Durbin R.M."/>
            <person name="Eyras E."/>
            <person name="Searle S.M."/>
            <person name="Cooper G.M."/>
            <person name="Batzoglou S."/>
            <person name="Brudno M."/>
            <person name="Sidow A."/>
            <person name="Stone E.A."/>
            <person name="Payseur B.A."/>
            <person name="Bourque G."/>
            <person name="Lopez-Otin C."/>
            <person name="Puente X.S."/>
            <person name="Chakrabarti K."/>
            <person name="Chatterji S."/>
            <person name="Dewey C."/>
            <person name="Pachter L."/>
            <person name="Bray N."/>
            <person name="Yap V.B."/>
            <person name="Caspi A."/>
            <person name="Tesler G."/>
            <person name="Pevzner P.A."/>
            <person name="Haussler D."/>
            <person name="Roskin K.M."/>
            <person name="Baertsch R."/>
            <person name="Clawson H."/>
            <person name="Furey T.S."/>
            <person name="Hinrichs A.S."/>
            <person name="Karolchik D."/>
            <person name="Kent W.J."/>
            <person name="Rosenbloom K.R."/>
            <person name="Trumbower H."/>
            <person name="Weirauch M."/>
            <person name="Cooper D.N."/>
            <person name="Stenson P.D."/>
            <person name="Ma B."/>
            <person name="Brent M."/>
            <person name="Arumugam M."/>
            <person name="Shteynberg D."/>
            <person name="Copley R.R."/>
            <person name="Taylor M.S."/>
            <person name="Riethman H."/>
            <person name="Mudunuri U."/>
            <person name="Peterson J."/>
            <person name="Guyer M."/>
            <person name="Felsenfeld A."/>
            <person name="Old S."/>
            <person name="Mockrin S."/>
            <person name="Collins F.S."/>
        </authorList>
    </citation>
    <scope>NUCLEOTIDE SEQUENCE [LARGE SCALE GENOMIC DNA]</scope>
    <source>
        <strain>Brown Norway</strain>
    </source>
</reference>
<reference key="2">
    <citation type="submission" date="2005-07" db="EMBL/GenBank/DDBJ databases">
        <authorList>
            <person name="Mural R.J."/>
            <person name="Li P.W."/>
            <person name="Adams M.D."/>
            <person name="Amanatides P.G."/>
            <person name="Baden-Tillson H."/>
            <person name="Barnstead M."/>
            <person name="Chin S.H."/>
            <person name="Dew I."/>
            <person name="Evans C.A."/>
            <person name="Ferriera S."/>
            <person name="Flanigan M."/>
            <person name="Fosler C."/>
            <person name="Glodek A."/>
            <person name="Gu Z."/>
            <person name="Holt R.A."/>
            <person name="Jennings D."/>
            <person name="Kraft C.L."/>
            <person name="Lu F."/>
            <person name="Nguyen T."/>
            <person name="Nusskern D.R."/>
            <person name="Pfannkoch C.M."/>
            <person name="Sitter C."/>
            <person name="Sutton G.G."/>
            <person name="Venter J.C."/>
            <person name="Wang Z."/>
            <person name="Woodage T."/>
            <person name="Zheng X.H."/>
            <person name="Zhong F."/>
        </authorList>
    </citation>
    <scope>NUCLEOTIDE SEQUENCE [LARGE SCALE GENOMIC DNA]</scope>
    <source>
        <strain>Brown Norway</strain>
    </source>
</reference>
<gene>
    <name evidence="2" type="primary">Snrpc</name>
</gene>
<keyword id="KW-0007">Acetylation</keyword>
<keyword id="KW-0479">Metal-binding</keyword>
<keyword id="KW-0539">Nucleus</keyword>
<keyword id="KW-0597">Phosphoprotein</keyword>
<keyword id="KW-1185">Reference proteome</keyword>
<keyword id="KW-0687">Ribonucleoprotein</keyword>
<keyword id="KW-0694">RNA-binding</keyword>
<keyword id="KW-0862">Zinc</keyword>
<keyword id="KW-0863">Zinc-finger</keyword>
<organism>
    <name type="scientific">Rattus norvegicus</name>
    <name type="common">Rat</name>
    <dbReference type="NCBI Taxonomy" id="10116"/>
    <lineage>
        <taxon>Eukaryota</taxon>
        <taxon>Metazoa</taxon>
        <taxon>Chordata</taxon>
        <taxon>Craniata</taxon>
        <taxon>Vertebrata</taxon>
        <taxon>Euteleostomi</taxon>
        <taxon>Mammalia</taxon>
        <taxon>Eutheria</taxon>
        <taxon>Euarchontoglires</taxon>
        <taxon>Glires</taxon>
        <taxon>Rodentia</taxon>
        <taxon>Myomorpha</taxon>
        <taxon>Muroidea</taxon>
        <taxon>Muridae</taxon>
        <taxon>Murinae</taxon>
        <taxon>Rattus</taxon>
    </lineage>
</organism>
<accession>D3ZCL3</accession>
<comment type="function">
    <text evidence="2">Component of the spliceosomal U1 snRNP, which is essential for recognition of the pre-mRNA 5' splice-site and the subsequent assembly of the spliceosome. SNRPC/U1-C is directly involved in initial 5' splice-site recognition for both constitutive and regulated alternative splicing. The interaction with the 5' splice-site seems to precede base-pairing between the pre-mRNA and the U1 snRNA. Stimulates commitment or early (E) complex formation by stabilizing the base pairing of the 5' end of the U1 snRNA and the 5' splice-site region.</text>
</comment>
<comment type="subunit">
    <text evidence="1 2">Component of the U1 snRNP. The U1 snRNP is composed of the U1 snRNA and the 7 core Sm proteins SNRPB, SNRPD1, SNRPD2, SNRPD3, SNRPE, SNRPF and SNRPG that assemble in a heptameric protein ring on the Sm site of the small nuclear RNA to form the core snRNP, and at least 3 U1 snRNP-specific proteins SNRNP70/U1-70K, SNRPA/U1-A and SNRPC/U1-C. SNRPC/U1-C interacts with U1 snRNA and the 5' splice-site region of the pre-mRNA (By similarity). Interacts (via N-terminus) with TIA1 (via C-terminus); thereby promoting spliceosomal U1 snRNP recruitment to 5' splice sites (By similarity).</text>
</comment>
<comment type="subcellular location">
    <subcellularLocation>
        <location evidence="2">Nucleus</location>
    </subcellularLocation>
</comment>
<comment type="similarity">
    <text evidence="2">Belongs to the U1 small nuclear ribonucleoprotein C family.</text>
</comment>
<sequence>MPKFYCDYCDTYLTHDSPSVRKTHCSGRKHKENVKDYYQKWMEEQAQSLIDKTTAAFQQGKIPPAPFSAPPPAGAMIPPPPSLPGPPRPGMMPAPHMGGPPMMPMMGPPPPGMMPVGPAPGMRPPMGGHMPMMPGPPMMRPPARPMMVPTRPGMTRPDR</sequence>
<proteinExistence type="inferred from homology"/>
<protein>
    <recommendedName>
        <fullName evidence="2">U1 small nuclear ribonucleoprotein C</fullName>
        <shortName evidence="2">U1 snRNP C</shortName>
        <shortName evidence="2">U1-C</shortName>
        <shortName evidence="2">U1C</shortName>
    </recommendedName>
</protein>
<dbReference type="EMBL" id="CH473988">
    <property type="protein sequence ID" value="EDL96903.1"/>
    <property type="molecule type" value="Genomic_DNA"/>
</dbReference>
<dbReference type="RefSeq" id="NP_001257969.1">
    <property type="nucleotide sequence ID" value="NM_001271040.1"/>
</dbReference>
<dbReference type="RefSeq" id="XP_006256282.1">
    <property type="nucleotide sequence ID" value="XM_006256220.3"/>
</dbReference>
<dbReference type="BMRB" id="D3ZCL3"/>
<dbReference type="SMR" id="D3ZCL3"/>
<dbReference type="FunCoup" id="D3ZCL3">
    <property type="interactions" value="1805"/>
</dbReference>
<dbReference type="STRING" id="10116.ENSRNOP00000000586"/>
<dbReference type="iPTMnet" id="D3ZCL3"/>
<dbReference type="PhosphoSitePlus" id="D3ZCL3"/>
<dbReference type="jPOST" id="D3ZCL3"/>
<dbReference type="PaxDb" id="10116-ENSRNOP00000000586"/>
<dbReference type="PeptideAtlas" id="D3ZCL3"/>
<dbReference type="Ensembl" id="ENSRNOT00000000586.8">
    <property type="protein sequence ID" value="ENSRNOP00000000586.6"/>
    <property type="gene ID" value="ENSRNOG00000000493.8"/>
</dbReference>
<dbReference type="GeneID" id="361808"/>
<dbReference type="KEGG" id="rno:361808"/>
<dbReference type="AGR" id="RGD:1306065"/>
<dbReference type="CTD" id="6631"/>
<dbReference type="RGD" id="1306065">
    <property type="gene designation" value="Snrpc"/>
</dbReference>
<dbReference type="eggNOG" id="KOG3454">
    <property type="taxonomic scope" value="Eukaryota"/>
</dbReference>
<dbReference type="GeneTree" id="ENSGT00730000110997"/>
<dbReference type="HOGENOM" id="CLU_079697_3_0_1"/>
<dbReference type="InParanoid" id="D3ZCL3"/>
<dbReference type="OrthoDB" id="76567at2759"/>
<dbReference type="TreeFam" id="TF313578"/>
<dbReference type="Reactome" id="R-RNO-72163">
    <property type="pathway name" value="mRNA Splicing - Major Pathway"/>
</dbReference>
<dbReference type="PRO" id="PR:D3ZCL3"/>
<dbReference type="Proteomes" id="UP000002494">
    <property type="component" value="Chromosome 20"/>
</dbReference>
<dbReference type="Proteomes" id="UP000234681">
    <property type="component" value="Chromosome 20"/>
</dbReference>
<dbReference type="Bgee" id="ENSRNOG00000000493">
    <property type="expression patterns" value="Expressed in thymus and 19 other cell types or tissues"/>
</dbReference>
<dbReference type="GO" id="GO:0015030">
    <property type="term" value="C:Cajal body"/>
    <property type="evidence" value="ECO:0000266"/>
    <property type="project" value="RGD"/>
</dbReference>
<dbReference type="GO" id="GO:0000243">
    <property type="term" value="C:commitment complex"/>
    <property type="evidence" value="ECO:0007669"/>
    <property type="project" value="UniProtKB-UniRule"/>
</dbReference>
<dbReference type="GO" id="GO:0005681">
    <property type="term" value="C:spliceosomal complex"/>
    <property type="evidence" value="ECO:0000266"/>
    <property type="project" value="RGD"/>
</dbReference>
<dbReference type="GO" id="GO:0005685">
    <property type="term" value="C:U1 snRNP"/>
    <property type="evidence" value="ECO:0000314"/>
    <property type="project" value="RGD"/>
</dbReference>
<dbReference type="GO" id="GO:0071004">
    <property type="term" value="C:U2-type prespliceosome"/>
    <property type="evidence" value="ECO:0007669"/>
    <property type="project" value="UniProtKB-UniRule"/>
</dbReference>
<dbReference type="GO" id="GO:0003729">
    <property type="term" value="F:mRNA binding"/>
    <property type="evidence" value="ECO:0007669"/>
    <property type="project" value="UniProtKB-UniRule"/>
</dbReference>
<dbReference type="GO" id="GO:0030627">
    <property type="term" value="F:pre-mRNA 5'-splice site binding"/>
    <property type="evidence" value="ECO:0000318"/>
    <property type="project" value="GO_Central"/>
</dbReference>
<dbReference type="GO" id="GO:0042803">
    <property type="term" value="F:protein homodimerization activity"/>
    <property type="evidence" value="ECO:0000266"/>
    <property type="project" value="RGD"/>
</dbReference>
<dbReference type="GO" id="GO:0003727">
    <property type="term" value="F:single-stranded RNA binding"/>
    <property type="evidence" value="ECO:0000266"/>
    <property type="project" value="RGD"/>
</dbReference>
<dbReference type="GO" id="GO:1990446">
    <property type="term" value="F:U1 snRNP binding"/>
    <property type="evidence" value="ECO:0000314"/>
    <property type="project" value="RGD"/>
</dbReference>
<dbReference type="GO" id="GO:0008270">
    <property type="term" value="F:zinc ion binding"/>
    <property type="evidence" value="ECO:0000266"/>
    <property type="project" value="RGD"/>
</dbReference>
<dbReference type="GO" id="GO:0000395">
    <property type="term" value="P:mRNA 5'-splice site recognition"/>
    <property type="evidence" value="ECO:0000318"/>
    <property type="project" value="GO_Central"/>
</dbReference>
<dbReference type="GO" id="GO:0000398">
    <property type="term" value="P:mRNA splicing, via spliceosome"/>
    <property type="evidence" value="ECO:0000266"/>
    <property type="project" value="RGD"/>
</dbReference>
<dbReference type="GO" id="GO:0000387">
    <property type="term" value="P:spliceosomal snRNP assembly"/>
    <property type="evidence" value="ECO:0000266"/>
    <property type="project" value="RGD"/>
</dbReference>
<dbReference type="FunFam" id="3.30.160.60:FF:000059">
    <property type="entry name" value="U1 small nuclear ribonucleoprotein C"/>
    <property type="match status" value="1"/>
</dbReference>
<dbReference type="Gene3D" id="3.30.160.60">
    <property type="entry name" value="Classic Zinc Finger"/>
    <property type="match status" value="1"/>
</dbReference>
<dbReference type="HAMAP" id="MF_03153">
    <property type="entry name" value="U1_C"/>
    <property type="match status" value="1"/>
</dbReference>
<dbReference type="InterPro" id="IPR000690">
    <property type="entry name" value="Matrin/U1-C_Znf_C2H2"/>
</dbReference>
<dbReference type="InterPro" id="IPR003604">
    <property type="entry name" value="Matrin/U1-like-C_Znf_C2H2"/>
</dbReference>
<dbReference type="InterPro" id="IPR013085">
    <property type="entry name" value="U1-CZ_Znf_C2H2"/>
</dbReference>
<dbReference type="InterPro" id="IPR017340">
    <property type="entry name" value="U1_snRNP-C"/>
</dbReference>
<dbReference type="InterPro" id="IPR036236">
    <property type="entry name" value="Znf_C2H2_sf"/>
</dbReference>
<dbReference type="PANTHER" id="PTHR31148">
    <property type="entry name" value="U1 SMALL NUCLEAR RIBONUCLEOPROTEIN C"/>
    <property type="match status" value="1"/>
</dbReference>
<dbReference type="PANTHER" id="PTHR31148:SF1">
    <property type="entry name" value="U1 SMALL NUCLEAR RIBONUCLEOPROTEIN C"/>
    <property type="match status" value="1"/>
</dbReference>
<dbReference type="Pfam" id="PF06220">
    <property type="entry name" value="zf-U1"/>
    <property type="match status" value="1"/>
</dbReference>
<dbReference type="PIRSF" id="PIRSF037969">
    <property type="entry name" value="U1_snRNP-C"/>
    <property type="match status" value="1"/>
</dbReference>
<dbReference type="SMART" id="SM00451">
    <property type="entry name" value="ZnF_U1"/>
    <property type="match status" value="1"/>
</dbReference>
<dbReference type="SUPFAM" id="SSF57667">
    <property type="entry name" value="beta-beta-alpha zinc fingers"/>
    <property type="match status" value="1"/>
</dbReference>
<dbReference type="PROSITE" id="PS50171">
    <property type="entry name" value="ZF_MATRIN"/>
    <property type="match status" value="1"/>
</dbReference>
<name>RU1C_RAT</name>
<evidence type="ECO:0000250" key="1">
    <source>
        <dbReference type="UniProtKB" id="P09234"/>
    </source>
</evidence>
<evidence type="ECO:0000255" key="2">
    <source>
        <dbReference type="HAMAP-Rule" id="MF_03153"/>
    </source>
</evidence>
<evidence type="ECO:0000256" key="3">
    <source>
        <dbReference type="SAM" id="MobiDB-lite"/>
    </source>
</evidence>